<protein>
    <recommendedName>
        <fullName evidence="6">Conopressin-conophysin</fullName>
    </recommendedName>
    <component>
        <recommendedName>
            <fullName evidence="5">Conopressin-ba1a</fullName>
        </recommendedName>
        <alternativeName>
            <fullName evidence="5">Conopressin-ba1c</fullName>
        </alternativeName>
    </component>
    <component>
        <recommendedName>
            <fullName evidence="5">Conopressin-ba1b</fullName>
        </recommendedName>
    </component>
    <component>
        <recommendedName>
            <fullName evidence="6">Conophysin ba1</fullName>
        </recommendedName>
    </component>
</protein>
<accession>P0DTJ2</accession>
<dbReference type="SMR" id="P0DTJ2"/>
<dbReference type="GO" id="GO:0005615">
    <property type="term" value="C:extracellular space"/>
    <property type="evidence" value="ECO:0007669"/>
    <property type="project" value="TreeGrafter"/>
</dbReference>
<dbReference type="GO" id="GO:0030141">
    <property type="term" value="C:secretory granule"/>
    <property type="evidence" value="ECO:0007669"/>
    <property type="project" value="TreeGrafter"/>
</dbReference>
<dbReference type="GO" id="GO:0005185">
    <property type="term" value="F:neurohypophyseal hormone activity"/>
    <property type="evidence" value="ECO:0007669"/>
    <property type="project" value="InterPro"/>
</dbReference>
<dbReference type="GO" id="GO:0090729">
    <property type="term" value="F:toxin activity"/>
    <property type="evidence" value="ECO:0007669"/>
    <property type="project" value="UniProtKB-KW"/>
</dbReference>
<dbReference type="Gene3D" id="2.60.9.10">
    <property type="entry name" value="Neurohypophysial hormone domain"/>
    <property type="match status" value="1"/>
</dbReference>
<dbReference type="InterPro" id="IPR000981">
    <property type="entry name" value="Neurhyp_horm"/>
</dbReference>
<dbReference type="InterPro" id="IPR036387">
    <property type="entry name" value="Neurhyp_horm_dom_sf"/>
</dbReference>
<dbReference type="InterPro" id="IPR022423">
    <property type="entry name" value="Neurohypophysial_hormone_CS"/>
</dbReference>
<dbReference type="PANTHER" id="PTHR11681:SF5">
    <property type="entry name" value="ISOTOCIN"/>
    <property type="match status" value="1"/>
</dbReference>
<dbReference type="PANTHER" id="PTHR11681">
    <property type="entry name" value="NEUROPHYSIN"/>
    <property type="match status" value="1"/>
</dbReference>
<dbReference type="Pfam" id="PF00220">
    <property type="entry name" value="Hormone_4"/>
    <property type="match status" value="1"/>
</dbReference>
<dbReference type="Pfam" id="PF00184">
    <property type="entry name" value="Hormone_5"/>
    <property type="match status" value="1"/>
</dbReference>
<dbReference type="PRINTS" id="PR00831">
    <property type="entry name" value="NEUROPHYSIN"/>
</dbReference>
<dbReference type="SMART" id="SM00003">
    <property type="entry name" value="NH"/>
    <property type="match status" value="1"/>
</dbReference>
<dbReference type="SUPFAM" id="SSF49606">
    <property type="entry name" value="Neurophysin II"/>
    <property type="match status" value="1"/>
</dbReference>
<dbReference type="PROSITE" id="PS00264">
    <property type="entry name" value="NEUROHYPOPHYS_HORM"/>
    <property type="match status" value="1"/>
</dbReference>
<proteinExistence type="evidence at protein level"/>
<keyword id="KW-0027">Amidation</keyword>
<keyword id="KW-0165">Cleavage on pair of basic residues</keyword>
<keyword id="KW-0903">Direct protein sequencing</keyword>
<keyword id="KW-1015">Disulfide bond</keyword>
<keyword id="KW-0379">Hydroxylation</keyword>
<keyword id="KW-0964">Secreted</keyword>
<keyword id="KW-0732">Signal</keyword>
<keyword id="KW-0800">Toxin</keyword>
<comment type="subcellular location">
    <subcellularLocation>
        <location evidence="4">Secreted</location>
    </subcellularLocation>
</comment>
<comment type="tissue specificity">
    <text evidence="7">Expressed by the venom duct.</text>
</comment>
<comment type="domain">
    <text evidence="6">The cysteine framework is C-C.</text>
</comment>
<comment type="mass spectrometry" mass="1081.3" method="MALDI" evidence="4">
    <molecule>Conopressin-ba1b</molecule>
</comment>
<comment type="mass spectrometry" mass="1023.5" method="MALDI" evidence="4">
    <molecule>Conopressin-ba1a</molecule>
    <text>amidated, not hydroxylated.</text>
</comment>
<comment type="mass spectrometry" mass="1039.5" method="MALDI" evidence="4">
    <text>Conopressin-ba1c, amidated, hydroxylated.</text>
</comment>
<comment type="similarity">
    <text evidence="6">Belongs to the vasopressin/oxytocin family.</text>
</comment>
<evidence type="ECO:0000250" key="1">
    <source>
        <dbReference type="UniProtKB" id="A0A4Y5X1A7"/>
    </source>
</evidence>
<evidence type="ECO:0000250" key="2">
    <source>
        <dbReference type="UniProtKB" id="P01175"/>
    </source>
</evidence>
<evidence type="ECO:0000250" key="3">
    <source>
        <dbReference type="UniProtKB" id="P05486"/>
    </source>
</evidence>
<evidence type="ECO:0000269" key="4">
    <source>
    </source>
</evidence>
<evidence type="ECO:0000303" key="5">
    <source>
    </source>
</evidence>
<evidence type="ECO:0000305" key="6"/>
<evidence type="ECO:0000305" key="7">
    <source>
    </source>
</evidence>
<organism>
    <name type="scientific">Conus bayani</name>
    <name type="common">Bayan's cone</name>
    <name type="synonym">Stellaconus bayani</name>
    <dbReference type="NCBI Taxonomy" id="2070216"/>
    <lineage>
        <taxon>Eukaryota</taxon>
        <taxon>Metazoa</taxon>
        <taxon>Spiralia</taxon>
        <taxon>Lophotrochozoa</taxon>
        <taxon>Mollusca</taxon>
        <taxon>Gastropoda</taxon>
        <taxon>Caenogastropoda</taxon>
        <taxon>Neogastropoda</taxon>
        <taxon>Conoidea</taxon>
        <taxon>Conidae</taxon>
        <taxon>Conus</taxon>
        <taxon>Splinoconus</taxon>
    </lineage>
</organism>
<feature type="signal peptide" evidence="7">
    <location>
        <begin position="1"/>
        <end position="20"/>
    </location>
</feature>
<feature type="peptide" id="PRO_0000454976" description="Conopressin-ba1b" evidence="4">
    <location>
        <begin position="21"/>
        <end position="30"/>
    </location>
</feature>
<feature type="peptide" id="PRO_0000454977" description="Conopressin-ba1a" evidence="4">
    <location>
        <begin position="21"/>
        <end position="29"/>
    </location>
</feature>
<feature type="chain" id="PRO_0000454978" description="Conophysin ba1" evidence="1">
    <location>
        <begin position="33"/>
        <end position="121"/>
    </location>
</feature>
<feature type="modified residue" description="4-hydroxyproline; partial; in Conopressin-ba1c" evidence="4">
    <location>
        <position position="27"/>
    </location>
</feature>
<feature type="modified residue" description="Glycine amide" evidence="4">
    <location>
        <position position="29"/>
    </location>
</feature>
<feature type="disulfide bond" evidence="3">
    <location>
        <begin position="21"/>
        <end position="26"/>
    </location>
</feature>
<feature type="disulfide bond" evidence="2">
    <location>
        <begin position="43"/>
        <end position="83"/>
    </location>
</feature>
<feature type="disulfide bond" evidence="2">
    <location>
        <begin position="46"/>
        <end position="57"/>
    </location>
</feature>
<feature type="disulfide bond" evidence="2">
    <location>
        <begin position="51"/>
        <end position="73"/>
    </location>
</feature>
<feature type="disulfide bond" evidence="2">
    <location>
        <begin position="58"/>
        <end position="63"/>
    </location>
</feature>
<feature type="disulfide bond" evidence="2">
    <location>
        <begin position="90"/>
        <end position="108"/>
    </location>
</feature>
<feature type="disulfide bond" evidence="2">
    <location>
        <begin position="102"/>
        <end position="120"/>
    </location>
</feature>
<feature type="disulfide bond" evidence="2">
    <location>
        <begin position="109"/>
        <end position="114"/>
    </location>
</feature>
<sequence length="121" mass="12861">MGRLTMALCWLLLLLLTTQACYITNCPRGGKRDVDDGLGVRPCMFCSFGQCVGPHICCGAGGCEIGTLEASTCHEENENPIPCHVFGDRCLLKHPGNVHGNCVSPGVCCTDDTCSMHVGCL</sequence>
<reference key="1">
    <citation type="journal article" date="2021" name="Mar. Drugs">
        <title>Diversity of Conopeptides and Conoenzymes from the Venom Duct of the Marine Cone Snail Conus bayani as Determined from Transcriptomic and Proteomic Analyses.</title>
        <authorList>
            <person name="Rajaian Pushpabai R."/>
            <person name="Wilson Alphonse C.R."/>
            <person name="Mani R."/>
            <person name="Arun Apte D."/>
            <person name="Franklin J.B."/>
        </authorList>
    </citation>
    <scope>NUCLEOTIDE SEQUENCE [MRNA]</scope>
    <scope>PROTEIN SEQUENCE OF 21-30</scope>
    <scope>MASS SPECTROMETRY</scope>
    <scope>SUBCELLULAR LOCATION</scope>
    <scope>AMIDATION AT GLY-29</scope>
    <scope>HYDROXYLATION AT PRO-27</scope>
    <source>
        <tissue>Venom</tissue>
        <tissue>Venom duct</tissue>
    </source>
</reference>
<name>CESSA_CONBY</name>